<protein>
    <recommendedName>
        <fullName>Proteasome subunit beta type-9</fullName>
        <ecNumber>3.4.25.1</ecNumber>
    </recommendedName>
    <alternativeName>
        <fullName>Low molecular mass protein 2</fullName>
    </alternativeName>
    <alternativeName>
        <fullName>Macropain chain 7</fullName>
    </alternativeName>
    <alternativeName>
        <fullName>Multicatalytic endopeptidase complex chain 7</fullName>
    </alternativeName>
    <alternativeName>
        <fullName>Proteasome chain 7</fullName>
    </alternativeName>
    <alternativeName>
        <fullName>Proteasome subunit beta-1i</fullName>
    </alternativeName>
    <alternativeName>
        <fullName>Really interesting new gene 12 protein</fullName>
    </alternativeName>
</protein>
<name>PSB9_MUSSI</name>
<comment type="function">
    <text>The proteasome is a multicatalytic proteinase complex which is characterized by its ability to cleave peptides with Arg, Phe, Tyr, Leu, and Glu adjacent to the leaving group at neutral or slightly basic pH. The proteasome has an ATP-dependent proteolytic activity. This subunit is involved in antigen processing to generate class I binding peptides.</text>
</comment>
<comment type="catalytic activity">
    <reaction>
        <text>Cleavage of peptide bonds with very broad specificity.</text>
        <dbReference type="EC" id="3.4.25.1"/>
    </reaction>
</comment>
<comment type="subunit">
    <text>The 26S proteasome consists of a 20S proteasome core and two 19S regulatory subunits. The 20S proteasome core is composed of 28 subunits that are arranged in four stacked rings, resulting in a barrel-shaped structure. The two end rings are each formed by seven alpha subunits, and the two central rings are each formed by seven beta subunits. The catalytic chamber with the active sites is on the inside of the barrel. Component of the immunoproteasome, where it displaces the equivalent housekeeping subunit PSMB6. Component of the spermatoproteasome, a form of the proteasome specifically found in testis.</text>
</comment>
<comment type="subcellular location">
    <subcellularLocation>
        <location evidence="4">Cytoplasm</location>
    </subcellularLocation>
    <subcellularLocation>
        <location evidence="1">Nucleus</location>
    </subcellularLocation>
</comment>
<comment type="induction">
    <text>Up-regulated by interferon gamma (at protein level).</text>
</comment>
<comment type="PTM">
    <text evidence="2">Autocleaved. The resulting N-terminal Thr residue of the mature subunit is responsible for the nucleophile proteolytic activity.</text>
</comment>
<comment type="miscellaneous">
    <text>Encoded in the MHC class II region.</text>
</comment>
<comment type="similarity">
    <text evidence="4">Belongs to the peptidase T1B family.</text>
</comment>
<keyword id="KW-0007">Acetylation</keyword>
<keyword id="KW-0963">Cytoplasm</keyword>
<keyword id="KW-0378">Hydrolase</keyword>
<keyword id="KW-0391">Immunity</keyword>
<keyword id="KW-0539">Nucleus</keyword>
<keyword id="KW-0645">Protease</keyword>
<keyword id="KW-0647">Proteasome</keyword>
<keyword id="KW-1185">Reference proteome</keyword>
<keyword id="KW-0888">Threonine protease</keyword>
<keyword id="KW-0865">Zymogen</keyword>
<evidence type="ECO:0000250" key="1"/>
<evidence type="ECO:0000250" key="2">
    <source>
        <dbReference type="UniProtKB" id="O35955"/>
    </source>
</evidence>
<evidence type="ECO:0000250" key="3">
    <source>
        <dbReference type="UniProtKB" id="P28065"/>
    </source>
</evidence>
<evidence type="ECO:0000255" key="4">
    <source>
        <dbReference type="PROSITE-ProRule" id="PRU00809"/>
    </source>
</evidence>
<gene>
    <name type="primary">Psmb9</name>
    <name type="synonym">Lmp2</name>
    <name type="synonym">Ring12</name>
</gene>
<accession>O35524</accession>
<dbReference type="EC" id="3.4.25.1"/>
<dbReference type="EMBL" id="D44463">
    <property type="protein sequence ID" value="BAA22584.1"/>
    <property type="molecule type" value="mRNA"/>
</dbReference>
<dbReference type="SMR" id="O35524"/>
<dbReference type="MEROPS" id="T01.013"/>
<dbReference type="MGI" id="MGI:1346526">
    <property type="gene designation" value="Psmb9"/>
</dbReference>
<dbReference type="Proteomes" id="UP000694415">
    <property type="component" value="Unplaced"/>
</dbReference>
<dbReference type="GO" id="GO:0005829">
    <property type="term" value="C:cytosol"/>
    <property type="evidence" value="ECO:0007669"/>
    <property type="project" value="UniProtKB-ARBA"/>
</dbReference>
<dbReference type="GO" id="GO:0005654">
    <property type="term" value="C:nucleoplasm"/>
    <property type="evidence" value="ECO:0007669"/>
    <property type="project" value="UniProtKB-ARBA"/>
</dbReference>
<dbReference type="GO" id="GO:0019774">
    <property type="term" value="C:proteasome core complex, beta-subunit complex"/>
    <property type="evidence" value="ECO:0000250"/>
    <property type="project" value="UniProtKB"/>
</dbReference>
<dbReference type="GO" id="GO:1990111">
    <property type="term" value="C:spermatoproteasome complex"/>
    <property type="evidence" value="ECO:0000250"/>
    <property type="project" value="UniProtKB"/>
</dbReference>
<dbReference type="GO" id="GO:0004298">
    <property type="term" value="F:threonine-type endopeptidase activity"/>
    <property type="evidence" value="ECO:0007669"/>
    <property type="project" value="UniProtKB-KW"/>
</dbReference>
<dbReference type="GO" id="GO:0002376">
    <property type="term" value="P:immune system process"/>
    <property type="evidence" value="ECO:0007669"/>
    <property type="project" value="UniProtKB-KW"/>
</dbReference>
<dbReference type="GO" id="GO:0051603">
    <property type="term" value="P:proteolysis involved in protein catabolic process"/>
    <property type="evidence" value="ECO:0007669"/>
    <property type="project" value="InterPro"/>
</dbReference>
<dbReference type="CDD" id="cd03762">
    <property type="entry name" value="proteasome_beta_type_6"/>
    <property type="match status" value="1"/>
</dbReference>
<dbReference type="FunFam" id="3.60.20.10:FF:000010">
    <property type="entry name" value="Proteasome subunit beta type-1"/>
    <property type="match status" value="1"/>
</dbReference>
<dbReference type="Gene3D" id="3.60.20.10">
    <property type="entry name" value="Glutamine Phosphoribosylpyrophosphate, subunit 1, domain 1"/>
    <property type="match status" value="1"/>
</dbReference>
<dbReference type="InterPro" id="IPR029055">
    <property type="entry name" value="Ntn_hydrolases_N"/>
</dbReference>
<dbReference type="InterPro" id="IPR000243">
    <property type="entry name" value="Pept_T1A_subB"/>
</dbReference>
<dbReference type="InterPro" id="IPR016050">
    <property type="entry name" value="Proteasome_bsu_CS"/>
</dbReference>
<dbReference type="InterPro" id="IPR001353">
    <property type="entry name" value="Proteasome_sua/b"/>
</dbReference>
<dbReference type="InterPro" id="IPR023333">
    <property type="entry name" value="Proteasome_suB-type"/>
</dbReference>
<dbReference type="PANTHER" id="PTHR32194">
    <property type="entry name" value="METALLOPROTEASE TLDD"/>
    <property type="match status" value="1"/>
</dbReference>
<dbReference type="PANTHER" id="PTHR32194:SF12">
    <property type="entry name" value="PROTEASOME SUBUNIT BETA"/>
    <property type="match status" value="1"/>
</dbReference>
<dbReference type="Pfam" id="PF00227">
    <property type="entry name" value="Proteasome"/>
    <property type="match status" value="1"/>
</dbReference>
<dbReference type="PRINTS" id="PR00141">
    <property type="entry name" value="PROTEASOME"/>
</dbReference>
<dbReference type="SUPFAM" id="SSF56235">
    <property type="entry name" value="N-terminal nucleophile aminohydrolases (Ntn hydrolases)"/>
    <property type="match status" value="1"/>
</dbReference>
<dbReference type="PROSITE" id="PS00854">
    <property type="entry name" value="PROTEASOME_BETA_1"/>
    <property type="match status" value="1"/>
</dbReference>
<dbReference type="PROSITE" id="PS51476">
    <property type="entry name" value="PROTEASOME_BETA_2"/>
    <property type="match status" value="1"/>
</dbReference>
<feature type="propeptide" id="PRO_0000026629" description="Removed in mature form" evidence="1">
    <location>
        <begin position="1"/>
        <end position="20"/>
    </location>
</feature>
<feature type="chain" id="PRO_0000026630" description="Proteasome subunit beta type-9">
    <location>
        <begin position="21"/>
        <end position="219"/>
    </location>
</feature>
<feature type="active site" description="Nucleophile" evidence="1">
    <location>
        <position position="21"/>
    </location>
</feature>
<feature type="site" description="Cleavage; by autolysis" evidence="2">
    <location>
        <begin position="20"/>
        <end position="21"/>
    </location>
</feature>
<feature type="modified residue" description="N6-acetyllysine" evidence="3">
    <location>
        <position position="53"/>
    </location>
</feature>
<feature type="modified residue" description="N6-acetyllysine" evidence="3">
    <location>
        <position position="109"/>
    </location>
</feature>
<organism>
    <name type="scientific">Mus spicilegus</name>
    <name type="common">Steppe mouse</name>
    <dbReference type="NCBI Taxonomy" id="10103"/>
    <lineage>
        <taxon>Eukaryota</taxon>
        <taxon>Metazoa</taxon>
        <taxon>Chordata</taxon>
        <taxon>Craniata</taxon>
        <taxon>Vertebrata</taxon>
        <taxon>Euteleostomi</taxon>
        <taxon>Mammalia</taxon>
        <taxon>Eutheria</taxon>
        <taxon>Euarchontoglires</taxon>
        <taxon>Glires</taxon>
        <taxon>Rodentia</taxon>
        <taxon>Myomorpha</taxon>
        <taxon>Muroidea</taxon>
        <taxon>Muridae</taxon>
        <taxon>Murinae</taxon>
        <taxon>Mus</taxon>
        <taxon>Mus</taxon>
    </lineage>
</organism>
<reference key="1">
    <citation type="submission" date="1994-12" db="EMBL/GenBank/DDBJ databases">
        <authorList>
            <person name="Mizuno K."/>
            <person name="Saitou N."/>
            <person name="Tsutiya K."/>
            <person name="Sagai T."/>
            <person name="Moriwaki K."/>
            <person name="Shiroishi T."/>
        </authorList>
    </citation>
    <scope>NUCLEOTIDE SEQUENCE [MRNA]</scope>
    <source>
        <strain>ZBN</strain>
        <tissue>Spleen</tissue>
    </source>
</reference>
<sequence>MLRAGAPTAGSFRTEEVHTGTTIMAVEFDGGVVVGSDSRVSAGTAVVNRVFDKLSPLHQRIFCALSGSAADAQAIADMAAYQLELHGLELEEPPLVLAAANVVKNISYKYREDLLAHLIVAGWDQREGGQVYGTMGGMLIRQPFTIGGSGSSYIYGYVDAAYKPGMTPEECRRFTTNAITLAMNRDGSSGGVIYLVTITAAGVDHRVILGDELPRFYDE</sequence>
<proteinExistence type="evidence at protein level"/>